<keyword id="KW-0002">3D-structure</keyword>
<keyword id="KW-0067">ATP-binding</keyword>
<keyword id="KW-0903">Direct protein sequencing</keyword>
<keyword id="KW-0408">Iron</keyword>
<keyword id="KW-0411">Iron-sulfur</keyword>
<keyword id="KW-0479">Metal-binding</keyword>
<keyword id="KW-0500">Molybdenum</keyword>
<keyword id="KW-0535">Nitrogen fixation</keyword>
<keyword id="KW-0547">Nucleotide-binding</keyword>
<keyword id="KW-0560">Oxidoreductase</keyword>
<evidence type="ECO:0000269" key="1">
    <source>
    </source>
</evidence>
<evidence type="ECO:0000269" key="2">
    <source>
    </source>
</evidence>
<evidence type="ECO:0000305" key="3"/>
<evidence type="ECO:0007829" key="4">
    <source>
        <dbReference type="PDB" id="1MIO"/>
    </source>
</evidence>
<evidence type="ECO:0007829" key="5">
    <source>
        <dbReference type="PDB" id="4WES"/>
    </source>
</evidence>
<evidence type="ECO:0007829" key="6">
    <source>
        <dbReference type="PDB" id="4WN9"/>
    </source>
</evidence>
<sequence length="534" mass="59126">MSENLKDEILEKYIPKTKKTRSGHIVIKTEETPNPEIVANTRTVPGIITARGCAYAGCKGVVMGPIKDMVHITHGPIGCSFYTWGGRRFKSKPENGTGLNFNEYVFSTDMQESDIVFGGVNKLKDAIHEAYEMFHPAAIGVYATCPVGLIGDDILAVAATASKEIGIPVHAFSCEGYKGVSQSAGHHIANNTVMTDIIGKGNKEQKKYSINVLGEYNIGGDAWEMDRVLEKIGYHVNATLTGDATYEKVQNADKADLNLVQCHRSINYIAEMMETKYGIPWIKCNFIGVDGIVETLRDMAKCFDDPELTKRTEEVIAEEIAAIQDDLDYFKEKLQGKTACLYVGGSRSHTYMNMLKSFGVDSLVAGFEFAHRDDYEGREVIPTIKIDADSKNIPEITVTPDEQKYRVVIPEDKVEELKKAGVPLSSYGGMMKEMHDGTILIDDMNHHDMEVVLEKLKPDMFFAGIKEKFVIQKGGVLSKQLHSYDYNGPYAGFRGVVNFGHELVNGIYTPAWKMITPPWKKASSESKVVVGGEA</sequence>
<gene>
    <name type="primary">nifD</name>
</gene>
<comment type="function">
    <text>This molybdenum-iron protein is part of the nitrogenase complex that catalyzes the key enzymatic reactions in nitrogen fixation.</text>
</comment>
<comment type="catalytic activity">
    <reaction>
        <text>N2 + 8 reduced [2Fe-2S]-[ferredoxin] + 16 ATP + 16 H2O = H2 + 8 oxidized [2Fe-2S]-[ferredoxin] + 2 NH4(+) + 16 ADP + 16 phosphate + 6 H(+)</text>
        <dbReference type="Rhea" id="RHEA:21448"/>
        <dbReference type="Rhea" id="RHEA-COMP:10000"/>
        <dbReference type="Rhea" id="RHEA-COMP:10001"/>
        <dbReference type="ChEBI" id="CHEBI:15377"/>
        <dbReference type="ChEBI" id="CHEBI:15378"/>
        <dbReference type="ChEBI" id="CHEBI:17997"/>
        <dbReference type="ChEBI" id="CHEBI:18276"/>
        <dbReference type="ChEBI" id="CHEBI:28938"/>
        <dbReference type="ChEBI" id="CHEBI:30616"/>
        <dbReference type="ChEBI" id="CHEBI:33737"/>
        <dbReference type="ChEBI" id="CHEBI:33738"/>
        <dbReference type="ChEBI" id="CHEBI:43474"/>
        <dbReference type="ChEBI" id="CHEBI:456216"/>
        <dbReference type="EC" id="1.18.6.1"/>
    </reaction>
</comment>
<comment type="cofactor">
    <cofactor evidence="2">
        <name>[8Fe-7S] cluster</name>
        <dbReference type="ChEBI" id="CHEBI:21143"/>
    </cofactor>
    <text evidence="2">Binds 1 [8Fe-7S] cluster per heterodimer.</text>
</comment>
<comment type="cofactor">
    <cofactor evidence="2">
        <name>[7Fe-Mo-9S-C-homocitryl] cluster</name>
        <dbReference type="ChEBI" id="CHEBI:30409"/>
    </cofactor>
    <text evidence="2">Binds 1 [7Fe-Mo-9S-C-homocitryl] cluster per subunit.</text>
</comment>
<comment type="subunit">
    <text evidence="2">Tetramer of two alpha and two beta chains. Forms complex with the iron protein (nitrogenase component 2).</text>
</comment>
<comment type="similarity">
    <text evidence="3">Belongs to the NifD/NifK/NifE/NifN family.</text>
</comment>
<dbReference type="EC" id="1.18.6.1"/>
<dbReference type="EMBL" id="AY603957">
    <property type="protein sequence ID" value="AAA83531.2"/>
    <property type="molecule type" value="Genomic_DNA"/>
</dbReference>
<dbReference type="PIR" id="S07389">
    <property type="entry name" value="NICLMA"/>
</dbReference>
<dbReference type="RefSeq" id="WP_003447876.1">
    <property type="nucleotide sequence ID" value="NZ_LFYL01000003.1"/>
</dbReference>
<dbReference type="PDB" id="1MIO">
    <property type="method" value="X-ray"/>
    <property type="resolution" value="3.00 A"/>
    <property type="chains" value="A/C=2-534"/>
</dbReference>
<dbReference type="PDB" id="4WES">
    <property type="method" value="X-ray"/>
    <property type="resolution" value="1.08 A"/>
    <property type="chains" value="A/C=1-534"/>
</dbReference>
<dbReference type="PDB" id="4WN9">
    <property type="method" value="X-ray"/>
    <property type="resolution" value="1.90 A"/>
    <property type="chains" value="A/C=3-520"/>
</dbReference>
<dbReference type="PDB" id="5VPW">
    <property type="method" value="X-ray"/>
    <property type="resolution" value="1.85 A"/>
    <property type="chains" value="A/C=1-520"/>
</dbReference>
<dbReference type="PDB" id="5VQ3">
    <property type="method" value="X-ray"/>
    <property type="resolution" value="1.72 A"/>
    <property type="chains" value="A/C=1-520"/>
</dbReference>
<dbReference type="PDBsum" id="1MIO"/>
<dbReference type="PDBsum" id="4WES"/>
<dbReference type="PDBsum" id="4WN9"/>
<dbReference type="PDBsum" id="5VPW"/>
<dbReference type="PDBsum" id="5VQ3"/>
<dbReference type="SMR" id="P00467"/>
<dbReference type="GeneID" id="93073610"/>
<dbReference type="OrthoDB" id="9767044at2"/>
<dbReference type="BioCyc" id="MetaCyc:NIFDCP-MONOMER"/>
<dbReference type="BRENDA" id="1.18.6.1">
    <property type="organism ID" value="1502"/>
</dbReference>
<dbReference type="EvolutionaryTrace" id="P00467"/>
<dbReference type="GO" id="GO:0016612">
    <property type="term" value="C:molybdenum-iron nitrogenase complex"/>
    <property type="evidence" value="ECO:0007669"/>
    <property type="project" value="InterPro"/>
</dbReference>
<dbReference type="GO" id="GO:0005524">
    <property type="term" value="F:ATP binding"/>
    <property type="evidence" value="ECO:0007669"/>
    <property type="project" value="UniProtKB-KW"/>
</dbReference>
<dbReference type="GO" id="GO:0051536">
    <property type="term" value="F:iron-sulfur cluster binding"/>
    <property type="evidence" value="ECO:0007669"/>
    <property type="project" value="UniProtKB-KW"/>
</dbReference>
<dbReference type="GO" id="GO:0046872">
    <property type="term" value="F:metal ion binding"/>
    <property type="evidence" value="ECO:0007669"/>
    <property type="project" value="UniProtKB-KW"/>
</dbReference>
<dbReference type="GO" id="GO:0016163">
    <property type="term" value="F:nitrogenase activity"/>
    <property type="evidence" value="ECO:0007669"/>
    <property type="project" value="UniProtKB-EC"/>
</dbReference>
<dbReference type="GO" id="GO:0009399">
    <property type="term" value="P:nitrogen fixation"/>
    <property type="evidence" value="ECO:0007669"/>
    <property type="project" value="UniProtKB-KW"/>
</dbReference>
<dbReference type="Gene3D" id="3.40.50.12380">
    <property type="entry name" value="Nitrogenase MoFe cofactor biosynthesis protein NifE, C-terminal"/>
    <property type="match status" value="1"/>
</dbReference>
<dbReference type="Gene3D" id="3.40.50.1980">
    <property type="entry name" value="Nitrogenase molybdenum iron protein domain"/>
    <property type="match status" value="2"/>
</dbReference>
<dbReference type="InterPro" id="IPR000510">
    <property type="entry name" value="Nase/OxRdtase_comp1"/>
</dbReference>
<dbReference type="InterPro" id="IPR010143">
    <property type="entry name" value="Nase_comp1_asu"/>
</dbReference>
<dbReference type="InterPro" id="IPR000318">
    <property type="entry name" value="Nase_comp1_CS"/>
</dbReference>
<dbReference type="InterPro" id="IPR005972">
    <property type="entry name" value="Nase_Mo-Fe_asu"/>
</dbReference>
<dbReference type="NCBIfam" id="TIGR01862">
    <property type="entry name" value="N2-ase-Ialpha"/>
    <property type="match status" value="1"/>
</dbReference>
<dbReference type="NCBIfam" id="TIGR01282">
    <property type="entry name" value="nifD"/>
    <property type="match status" value="1"/>
</dbReference>
<dbReference type="PANTHER" id="PTHR43457">
    <property type="entry name" value="NITROGENASE MOLYBDENUM-IRON PROTEIN ALPHA CHAIN"/>
    <property type="match status" value="1"/>
</dbReference>
<dbReference type="PANTHER" id="PTHR43457:SF1">
    <property type="entry name" value="NITROGENASE MOLYBDENUM-IRON PROTEIN ALPHA CHAIN"/>
    <property type="match status" value="1"/>
</dbReference>
<dbReference type="Pfam" id="PF00148">
    <property type="entry name" value="Oxidored_nitro"/>
    <property type="match status" value="1"/>
</dbReference>
<dbReference type="SUPFAM" id="SSF53807">
    <property type="entry name" value="Helical backbone' metal receptor"/>
    <property type="match status" value="1"/>
</dbReference>
<dbReference type="PROSITE" id="PS00699">
    <property type="entry name" value="NITROGENASE_1_1"/>
    <property type="match status" value="1"/>
</dbReference>
<dbReference type="PROSITE" id="PS00090">
    <property type="entry name" value="NITROGENASE_1_2"/>
    <property type="match status" value="1"/>
</dbReference>
<feature type="initiator methionine" description="Removed" evidence="1">
    <location>
        <position position="1"/>
    </location>
</feature>
<feature type="chain" id="PRO_0000153064" description="Nitrogenase molybdenum-iron protein alpha chain">
    <location>
        <begin position="2"/>
        <end position="534"/>
    </location>
</feature>
<feature type="binding site">
    <location>
        <position position="53"/>
    </location>
    <ligand>
        <name>[8Fe-7S] cluster</name>
        <dbReference type="ChEBI" id="CHEBI:21143"/>
        <note>ligand shared with beta chain</note>
    </ligand>
</feature>
<feature type="binding site">
    <location>
        <position position="79"/>
    </location>
    <ligand>
        <name>[8Fe-7S] cluster</name>
        <dbReference type="ChEBI" id="CHEBI:21143"/>
        <note>ligand shared with beta chain</note>
    </ligand>
</feature>
<feature type="binding site">
    <location>
        <position position="145"/>
    </location>
    <ligand>
        <name>[8Fe-7S] cluster</name>
        <dbReference type="ChEBI" id="CHEBI:21143"/>
        <note>ligand shared with beta chain</note>
    </ligand>
</feature>
<feature type="binding site">
    <location>
        <position position="262"/>
    </location>
    <ligand>
        <name>[7Fe-Mo-9S-C-homocitryl] cluster</name>
        <dbReference type="ChEBI" id="CHEBI:30409"/>
    </ligand>
</feature>
<feature type="binding site">
    <location>
        <position position="482"/>
    </location>
    <ligand>
        <name>[7Fe-Mo-9S-C-homocitryl] cluster</name>
        <dbReference type="ChEBI" id="CHEBI:30409"/>
    </ligand>
</feature>
<feature type="sequence conflict" description="In Ref. 2; AA sequence." evidence="3" ref="2">
    <original>R</original>
    <variation>K</variation>
    <location>
        <position position="42"/>
    </location>
</feature>
<feature type="sequence conflict" description="In Ref. 2; AA sequence." evidence="3" ref="2">
    <original>N</original>
    <variation>D</variation>
    <location>
        <position position="95"/>
    </location>
</feature>
<feature type="helix" evidence="5">
    <location>
        <begin position="5"/>
        <end position="10"/>
    </location>
</feature>
<feature type="helix" evidence="5">
    <location>
        <begin position="15"/>
        <end position="22"/>
    </location>
</feature>
<feature type="strand" evidence="5">
    <location>
        <begin position="25"/>
        <end position="27"/>
    </location>
</feature>
<feature type="strand" evidence="6">
    <location>
        <begin position="30"/>
        <end position="34"/>
    </location>
</feature>
<feature type="helix" evidence="5">
    <location>
        <begin position="54"/>
        <end position="58"/>
    </location>
</feature>
<feature type="helix" evidence="5">
    <location>
        <begin position="59"/>
        <end position="63"/>
    </location>
</feature>
<feature type="strand" evidence="5">
    <location>
        <begin position="69"/>
        <end position="76"/>
    </location>
</feature>
<feature type="helix" evidence="5">
    <location>
        <begin position="77"/>
        <end position="81"/>
    </location>
</feature>
<feature type="strand" evidence="5">
    <location>
        <begin position="84"/>
        <end position="87"/>
    </location>
</feature>
<feature type="helix" evidence="5">
    <location>
        <begin position="94"/>
        <end position="96"/>
    </location>
</feature>
<feature type="strand" evidence="4">
    <location>
        <begin position="106"/>
        <end position="110"/>
    </location>
</feature>
<feature type="helix" evidence="5">
    <location>
        <begin position="112"/>
        <end position="117"/>
    </location>
</feature>
<feature type="helix" evidence="5">
    <location>
        <begin position="120"/>
        <end position="134"/>
    </location>
</feature>
<feature type="strand" evidence="5">
    <location>
        <begin position="137"/>
        <end position="143"/>
    </location>
</feature>
<feature type="helix" evidence="5">
    <location>
        <begin position="146"/>
        <end position="149"/>
    </location>
</feature>
<feature type="helix" evidence="5">
    <location>
        <begin position="154"/>
        <end position="165"/>
    </location>
</feature>
<feature type="strand" evidence="5">
    <location>
        <begin position="169"/>
        <end position="172"/>
    </location>
</feature>
<feature type="strand" evidence="5">
    <location>
        <begin position="178"/>
        <end position="181"/>
    </location>
</feature>
<feature type="helix" evidence="5">
    <location>
        <begin position="182"/>
        <end position="196"/>
    </location>
</feature>
<feature type="turn" evidence="5">
    <location>
        <begin position="197"/>
        <end position="199"/>
    </location>
</feature>
<feature type="strand" evidence="5">
    <location>
        <begin position="209"/>
        <end position="215"/>
    </location>
</feature>
<feature type="helix" evidence="5">
    <location>
        <begin position="221"/>
        <end position="232"/>
    </location>
</feature>
<feature type="strand" evidence="5">
    <location>
        <begin position="235"/>
        <end position="241"/>
    </location>
</feature>
<feature type="helix" evidence="5">
    <location>
        <begin position="246"/>
        <end position="250"/>
    </location>
</feature>
<feature type="turn" evidence="5">
    <location>
        <begin position="251"/>
        <end position="253"/>
    </location>
</feature>
<feature type="strand" evidence="5">
    <location>
        <begin position="256"/>
        <end position="262"/>
    </location>
</feature>
<feature type="helix" evidence="5">
    <location>
        <begin position="263"/>
        <end position="277"/>
    </location>
</feature>
<feature type="strand" evidence="5">
    <location>
        <begin position="281"/>
        <end position="283"/>
    </location>
</feature>
<feature type="helix" evidence="5">
    <location>
        <begin position="289"/>
        <end position="303"/>
    </location>
</feature>
<feature type="helix" evidence="5">
    <location>
        <begin position="306"/>
        <end position="334"/>
    </location>
</feature>
<feature type="strand" evidence="5">
    <location>
        <begin position="338"/>
        <end position="346"/>
    </location>
</feature>
<feature type="helix" evidence="5">
    <location>
        <begin position="347"/>
        <end position="350"/>
    </location>
</feature>
<feature type="helix" evidence="5">
    <location>
        <begin position="352"/>
        <end position="357"/>
    </location>
</feature>
<feature type="strand" evidence="5">
    <location>
        <begin position="361"/>
        <end position="369"/>
    </location>
</feature>
<feature type="helix" evidence="5">
    <location>
        <begin position="372"/>
        <end position="376"/>
    </location>
</feature>
<feature type="helix" evidence="5">
    <location>
        <begin position="378"/>
        <end position="383"/>
    </location>
</feature>
<feature type="turn" evidence="5">
    <location>
        <begin position="388"/>
        <end position="392"/>
    </location>
</feature>
<feature type="turn" evidence="5">
    <location>
        <begin position="402"/>
        <end position="404"/>
    </location>
</feature>
<feature type="helix" evidence="5">
    <location>
        <begin position="411"/>
        <end position="419"/>
    </location>
</feature>
<feature type="helix" evidence="5">
    <location>
        <begin position="430"/>
        <end position="433"/>
    </location>
</feature>
<feature type="strand" evidence="5">
    <location>
        <begin position="439"/>
        <end position="441"/>
    </location>
</feature>
<feature type="helix" evidence="5">
    <location>
        <begin position="446"/>
        <end position="456"/>
    </location>
</feature>
<feature type="strand" evidence="5">
    <location>
        <begin position="459"/>
        <end position="463"/>
    </location>
</feature>
<feature type="helix" evidence="5">
    <location>
        <begin position="465"/>
        <end position="473"/>
    </location>
</feature>
<feature type="strand" evidence="5">
    <location>
        <begin position="480"/>
        <end position="483"/>
    </location>
</feature>
<feature type="helix" evidence="5">
    <location>
        <begin position="484"/>
        <end position="486"/>
    </location>
</feature>
<feature type="helix" evidence="5">
    <location>
        <begin position="492"/>
        <end position="507"/>
    </location>
</feature>
<feature type="helix" evidence="5">
    <location>
        <begin position="510"/>
        <end position="513"/>
    </location>
</feature>
<feature type="strand" evidence="4">
    <location>
        <begin position="518"/>
        <end position="524"/>
    </location>
</feature>
<accession>P00467</accession>
<proteinExistence type="evidence at protein level"/>
<protein>
    <recommendedName>
        <fullName>Nitrogenase molybdenum-iron protein alpha chain</fullName>
        <ecNumber>1.18.6.1</ecNumber>
    </recommendedName>
    <alternativeName>
        <fullName>Dinitrogenase</fullName>
    </alternativeName>
    <alternativeName>
        <fullName>Nitrogenase component I</fullName>
    </alternativeName>
</protein>
<name>NIFD_CLOPA</name>
<organism>
    <name type="scientific">Clostridium pasteurianum</name>
    <dbReference type="NCBI Taxonomy" id="1501"/>
    <lineage>
        <taxon>Bacteria</taxon>
        <taxon>Bacillati</taxon>
        <taxon>Bacillota</taxon>
        <taxon>Clostridia</taxon>
        <taxon>Eubacteriales</taxon>
        <taxon>Clostridiaceae</taxon>
        <taxon>Clostridium</taxon>
    </lineage>
</organism>
<reference key="1">
    <citation type="journal article" date="1987" name="Nucleic Acids Res.">
        <title>Nucleotide and deduced amino acid sequences of nifD encoding the alpha-subunit of nitrogenase MoFe protein of Clostridium pasteurianum.</title>
        <authorList>
            <person name="Wang S.-Z."/>
            <person name="Chen J.-S."/>
            <person name="Johnson J.L."/>
        </authorList>
    </citation>
    <scope>NUCLEOTIDE SEQUENCE [GENOMIC DNA]</scope>
</reference>
<reference key="2">
    <citation type="journal article" date="1981" name="J. Biochem.">
        <title>Correspondence of the larger subunit of the MoFe-protein in clostridial nitrogenase to the nif D gene products of other N2-fixing organisms.</title>
        <authorList>
            <person name="Hase T."/>
            <person name="Nakano T."/>
            <person name="Matsubara H."/>
            <person name="Zumft W.G."/>
        </authorList>
    </citation>
    <scope>PROTEIN SEQUENCE OF 2-180</scope>
</reference>
<reference key="3">
    <citation type="journal article" date="1986" name="J. Bacteriol.">
        <title>Structural features of multiple nifH-like sequences and very biased codon usage in nitrogenase genes of Clostridium pasteurianum.</title>
        <authorList>
            <person name="Chen K.C.K."/>
            <person name="Chen J.-S."/>
            <person name="Johnson J.L."/>
        </authorList>
    </citation>
    <scope>NUCLEOTIDE SEQUENCE [GENOMIC DNA] OF 1-167</scope>
</reference>
<reference key="4">
    <citation type="journal article" date="1988" name="Biochemistry">
        <title>Distinct structural features of the alpha and beta subunits of nitrogenase molybdenum-iron protein of Clostridium pasteurianum: an analysis of amino acid sequences.</title>
        <authorList>
            <person name="Wang S.-Z."/>
            <person name="Chen J.-S."/>
            <person name="Johnson J.L."/>
        </authorList>
    </citation>
    <scope>NUCLEOTIDE SEQUENCE [GENOMIC DNA] OF 526-534</scope>
</reference>
<reference key="5">
    <citation type="journal article" date="1993" name="Biochemistry">
        <title>X-ray crystal structure of the nitrogenase molybdenum-iron protein from Clostridium pasteurianum at 3.0-A resolution.</title>
        <authorList>
            <person name="Kim J."/>
            <person name="Woo D."/>
            <person name="Rees D.C."/>
        </authorList>
    </citation>
    <scope>X-RAY CRYSTALLOGRAPHY (3.0 ANGSTROMS) IN COMPLEX WITH 8FE-7S CLUSTER AND 7FE-MO-9S-C-HOMOCITRYL CLUSTER</scope>
    <scope>SUBUNIT</scope>
    <scope>COFACTOR</scope>
</reference>